<dbReference type="EMBL" id="AF198100">
    <property type="protein sequence ID" value="AAF44523.1"/>
    <property type="molecule type" value="Genomic_DNA"/>
</dbReference>
<dbReference type="RefSeq" id="NP_039142.1">
    <property type="nucleotide sequence ID" value="NC_002188.1"/>
</dbReference>
<dbReference type="SMR" id="Q9J554"/>
<dbReference type="GeneID" id="1486727"/>
<dbReference type="KEGG" id="vg:1486727"/>
<dbReference type="Proteomes" id="UP000008597">
    <property type="component" value="Segment"/>
</dbReference>
<dbReference type="GO" id="GO:0016020">
    <property type="term" value="C:membrane"/>
    <property type="evidence" value="ECO:0007669"/>
    <property type="project" value="UniProtKB-KW"/>
</dbReference>
<dbReference type="GO" id="GO:0019031">
    <property type="term" value="C:viral envelope"/>
    <property type="evidence" value="ECO:0007669"/>
    <property type="project" value="UniProtKB-KW"/>
</dbReference>
<dbReference type="GO" id="GO:0055036">
    <property type="term" value="C:virion membrane"/>
    <property type="evidence" value="ECO:0007669"/>
    <property type="project" value="UniProtKB-SubCell"/>
</dbReference>
<dbReference type="InterPro" id="IPR008785">
    <property type="entry name" value="Poxvirus_A14"/>
</dbReference>
<dbReference type="Pfam" id="PF05767">
    <property type="entry name" value="Pox_A14"/>
    <property type="match status" value="1"/>
</dbReference>
<proteinExistence type="inferred from homology"/>
<evidence type="ECO:0000250" key="1"/>
<evidence type="ECO:0000255" key="2"/>
<evidence type="ECO:0000305" key="3"/>
<reference key="1">
    <citation type="journal article" date="2000" name="J. Virol.">
        <title>The genome of fowlpox virus.</title>
        <authorList>
            <person name="Afonso C.L."/>
            <person name="Tulman E.R."/>
            <person name="Lu Z."/>
            <person name="Zsak L."/>
            <person name="Kutish G.F."/>
            <person name="Rock D.L."/>
        </authorList>
    </citation>
    <scope>NUCLEOTIDE SEQUENCE [LARGE SCALE GENOMIC DNA]</scope>
</reference>
<protein>
    <recommendedName>
        <fullName>Virion membrane protein A14 homolog</fullName>
    </recommendedName>
</protein>
<organism>
    <name type="scientific">Fowlpox virus (strain NVSL)</name>
    <name type="common">FPV</name>
    <dbReference type="NCBI Taxonomy" id="928301"/>
    <lineage>
        <taxon>Viruses</taxon>
        <taxon>Varidnaviria</taxon>
        <taxon>Bamfordvirae</taxon>
        <taxon>Nucleocytoviricota</taxon>
        <taxon>Pokkesviricetes</taxon>
        <taxon>Chitovirales</taxon>
        <taxon>Poxviridae</taxon>
        <taxon>Chordopoxvirinae</taxon>
        <taxon>Avipoxvirus</taxon>
        <taxon>Fowlpox virus</taxon>
    </lineage>
</organism>
<sequence>MDPLGFFRNRPSYVVVFGIILLIVACICAYIELSKSGKPADSALRSISIISFILAILLLLGIILFSGYNRYCTGNVVDESRYATSPGTEIQ</sequence>
<feature type="chain" id="PRO_0000099244" description="Virion membrane protein A14 homolog">
    <location>
        <begin position="1"/>
        <end position="91"/>
    </location>
</feature>
<feature type="topological domain" description="Intravirion" evidence="2">
    <location>
        <begin position="1"/>
        <end position="12"/>
    </location>
</feature>
<feature type="transmembrane region" description="Helical" evidence="2">
    <location>
        <begin position="13"/>
        <end position="33"/>
    </location>
</feature>
<feature type="topological domain" description="Virion surface" evidence="2">
    <location>
        <begin position="34"/>
        <end position="46"/>
    </location>
</feature>
<feature type="transmembrane region" description="Helical" evidence="2">
    <location>
        <begin position="47"/>
        <end position="67"/>
    </location>
</feature>
<feature type="topological domain" description="Intravirion" evidence="2">
    <location>
        <begin position="68"/>
        <end position="91"/>
    </location>
</feature>
<feature type="disulfide bond" description="Interchain" evidence="1">
    <location>
        <position position="72"/>
    </location>
</feature>
<name>A14_FOWPN</name>
<accession>Q9J554</accession>
<gene>
    <name type="ordered locus">FPV179</name>
</gene>
<comment type="function">
    <text evidence="1">Envelope protein which is a major component of the mature virion (MV) membrane. Essential for membrane biogenesis. Is required, together with A17, to form bona fide crescents, which can progress to form the immature virion (IV) membrane. A14 and A17 form a lattice that is stabilized by disulfide bonds and serves as an anchor within the viral membrane to which several other proteins important in virion structure and morphogenesis attach (By similarity).</text>
</comment>
<comment type="subunit">
    <text evidence="1">Homodimer; disulfide-linked. Interacts with A17.</text>
</comment>
<comment type="subcellular location">
    <subcellularLocation>
        <location evidence="3">Virion membrane</location>
        <topology evidence="3">Multi-pass membrane protein</topology>
    </subcellularLocation>
    <text evidence="1">Component of the mature virion (MV) membrane.</text>
</comment>
<comment type="PTM">
    <text evidence="1">Phosphorylated by viral F10 kinase, phosphorylation state is regulated by H1 phosphatase.</text>
</comment>
<comment type="similarity">
    <text evidence="3">Belongs to the chordopoxvirinae A14 family.</text>
</comment>
<keyword id="KW-1015">Disulfide bond</keyword>
<keyword id="KW-0472">Membrane</keyword>
<keyword id="KW-0597">Phosphoprotein</keyword>
<keyword id="KW-1185">Reference proteome</keyword>
<keyword id="KW-0812">Transmembrane</keyword>
<keyword id="KW-1133">Transmembrane helix</keyword>
<keyword id="KW-0261">Viral envelope protein</keyword>
<keyword id="KW-0946">Virion</keyword>
<organismHost>
    <name type="scientific">Vertebrata</name>
    <dbReference type="NCBI Taxonomy" id="7742"/>
</organismHost>